<comment type="function">
    <text evidence="2">Component of the acetyl coenzyme A carboxylase (ACC) complex. Biotin carboxylase (BC) catalyzes the carboxylation of biotin on its carrier protein (BCCP) and then the CO(2) group is transferred by the transcarboxylase to acetyl-CoA to form malonyl-CoA.</text>
</comment>
<comment type="catalytic activity">
    <reaction evidence="2">
        <text>N(6)-carboxybiotinyl-L-lysyl-[protein] + acetyl-CoA = N(6)-biotinyl-L-lysyl-[protein] + malonyl-CoA</text>
        <dbReference type="Rhea" id="RHEA:54728"/>
        <dbReference type="Rhea" id="RHEA-COMP:10505"/>
        <dbReference type="Rhea" id="RHEA-COMP:10506"/>
        <dbReference type="ChEBI" id="CHEBI:57288"/>
        <dbReference type="ChEBI" id="CHEBI:57384"/>
        <dbReference type="ChEBI" id="CHEBI:83144"/>
        <dbReference type="ChEBI" id="CHEBI:83145"/>
        <dbReference type="EC" id="2.1.3.15"/>
    </reaction>
</comment>
<comment type="cofactor">
    <cofactor evidence="2">
        <name>Zn(2+)</name>
        <dbReference type="ChEBI" id="CHEBI:29105"/>
    </cofactor>
    <text evidence="2">Binds 1 zinc ion per subunit.</text>
</comment>
<comment type="pathway">
    <text evidence="2">Lipid metabolism; malonyl-CoA biosynthesis; malonyl-CoA from acetyl-CoA: step 1/1.</text>
</comment>
<comment type="subunit">
    <text evidence="1">Acetyl-CoA carboxylase is a heterohexamer composed of biotin carboxyl carrier protein, biotin carboxylase and 2 subunits each of ACCase subunit alpha and ACCase plastid-coded subunit beta (accD).</text>
</comment>
<comment type="subcellular location">
    <subcellularLocation>
        <location evidence="2">Plastid</location>
        <location evidence="2">Chloroplast stroma</location>
    </subcellularLocation>
</comment>
<comment type="similarity">
    <text evidence="2">Belongs to the AccD/PCCB family.</text>
</comment>
<comment type="sequence caution" evidence="5">
    <conflict type="erroneous initiation">
        <sequence resource="EMBL-CDS" id="ABQ81459"/>
    </conflict>
    <text>Extended N-terminus.</text>
</comment>
<proteinExistence type="inferred from homology"/>
<protein>
    <recommendedName>
        <fullName evidence="2">Acetyl-coenzyme A carboxylase carboxyl transferase subunit beta, chloroplastic</fullName>
        <shortName evidence="2">ACCase subunit beta</shortName>
        <shortName evidence="2">Acetyl-CoA carboxylase carboxyltransferase subunit beta</shortName>
        <ecNumber evidence="2">2.1.3.15</ecNumber>
    </recommendedName>
</protein>
<sequence length="491" mass="55871">MEKWWFNLILSNEELEHRCRLSKSMARPRPIGNTNGSQDPSINDRDKNGSDSGNYSFSNLDHLFDVKDNLSFIYDDTFLVRDSNGDSYSIYFDIENLIFEIDNDSFFLSKLESSFSNYLNSGSKNYNRYYDSYMYDTKYSWNNHINSYIDSYLCSEIRIDSYISSGIYNYSENYIYSYVWNGENVSTIKSRSSSIRTSANSSDINLKGRYNDFDINIKYRHLWVQCDNCYGLNYKKIFSSKMNICEQCGYHLKMSSSERIELSIDSGTWDPMNEDMVSTDPIEFHSEEEPYRDRIDSYQIKTGLTEAVQTGIGQLNGMPIAIGVMDFQFMGGSMGSVVGEKITRLIEYATNRSLPVIIVCASGGARMQEGSLSLMQMAKISSALYNYQLNKKLFYVSILTSPTTGGVTASFGMLGDIIIAEPNAYIAFAGKRVIEQTLNKTVPEGSQAAEYSFHKGLFDSIVPRNLLKGALSELLQLHGFFPLNHNSQVKR</sequence>
<name>ACCD_CERDE</name>
<reference key="1">
    <citation type="journal article" date="2007" name="Proc. Natl. Acad. Sci. U.S.A.">
        <title>Using plastid genome-scale data to resolve enigmatic relationships among basal angiosperms.</title>
        <authorList>
            <person name="Moore M.J."/>
            <person name="Bell C.D."/>
            <person name="Soltis P.S."/>
            <person name="Soltis D.E."/>
        </authorList>
    </citation>
    <scope>NUCLEOTIDE SEQUENCE [LARGE SCALE GENOMIC DNA]</scope>
</reference>
<dbReference type="EC" id="2.1.3.15" evidence="2"/>
<dbReference type="EMBL" id="EF614270">
    <property type="protein sequence ID" value="ABQ81459.1"/>
    <property type="status" value="ALT_INIT"/>
    <property type="molecule type" value="Genomic_DNA"/>
</dbReference>
<dbReference type="RefSeq" id="YP_001542456.1">
    <property type="nucleotide sequence ID" value="NC_009962.1"/>
</dbReference>
<dbReference type="SMR" id="A8SEB2"/>
<dbReference type="GeneID" id="5729449"/>
<dbReference type="UniPathway" id="UPA00655">
    <property type="reaction ID" value="UER00711"/>
</dbReference>
<dbReference type="GO" id="GO:0009317">
    <property type="term" value="C:acetyl-CoA carboxylase complex"/>
    <property type="evidence" value="ECO:0007669"/>
    <property type="project" value="InterPro"/>
</dbReference>
<dbReference type="GO" id="GO:0009570">
    <property type="term" value="C:chloroplast stroma"/>
    <property type="evidence" value="ECO:0007669"/>
    <property type="project" value="UniProtKB-SubCell"/>
</dbReference>
<dbReference type="GO" id="GO:0003989">
    <property type="term" value="F:acetyl-CoA carboxylase activity"/>
    <property type="evidence" value="ECO:0007669"/>
    <property type="project" value="InterPro"/>
</dbReference>
<dbReference type="GO" id="GO:0005524">
    <property type="term" value="F:ATP binding"/>
    <property type="evidence" value="ECO:0007669"/>
    <property type="project" value="UniProtKB-KW"/>
</dbReference>
<dbReference type="GO" id="GO:0016743">
    <property type="term" value="F:carboxyl- or carbamoyltransferase activity"/>
    <property type="evidence" value="ECO:0007669"/>
    <property type="project" value="UniProtKB-UniRule"/>
</dbReference>
<dbReference type="GO" id="GO:0008270">
    <property type="term" value="F:zinc ion binding"/>
    <property type="evidence" value="ECO:0007669"/>
    <property type="project" value="UniProtKB-UniRule"/>
</dbReference>
<dbReference type="GO" id="GO:0006633">
    <property type="term" value="P:fatty acid biosynthetic process"/>
    <property type="evidence" value="ECO:0007669"/>
    <property type="project" value="UniProtKB-KW"/>
</dbReference>
<dbReference type="GO" id="GO:2001295">
    <property type="term" value="P:malonyl-CoA biosynthetic process"/>
    <property type="evidence" value="ECO:0007669"/>
    <property type="project" value="UniProtKB-UniRule"/>
</dbReference>
<dbReference type="Gene3D" id="3.90.226.10">
    <property type="entry name" value="2-enoyl-CoA Hydratase, Chain A, domain 1"/>
    <property type="match status" value="1"/>
</dbReference>
<dbReference type="HAMAP" id="MF_01395">
    <property type="entry name" value="AcetylCoA_CT_beta"/>
    <property type="match status" value="1"/>
</dbReference>
<dbReference type="InterPro" id="IPR034733">
    <property type="entry name" value="AcCoA_carboxyl_beta"/>
</dbReference>
<dbReference type="InterPro" id="IPR000438">
    <property type="entry name" value="Acetyl_CoA_COase_Trfase_b_su"/>
</dbReference>
<dbReference type="InterPro" id="IPR029045">
    <property type="entry name" value="ClpP/crotonase-like_dom_sf"/>
</dbReference>
<dbReference type="InterPro" id="IPR011762">
    <property type="entry name" value="COA_CT_N"/>
</dbReference>
<dbReference type="NCBIfam" id="TIGR00515">
    <property type="entry name" value="accD"/>
    <property type="match status" value="1"/>
</dbReference>
<dbReference type="PANTHER" id="PTHR42995">
    <property type="entry name" value="ACETYL-COENZYME A CARBOXYLASE CARBOXYL TRANSFERASE SUBUNIT BETA, CHLOROPLASTIC"/>
    <property type="match status" value="1"/>
</dbReference>
<dbReference type="PANTHER" id="PTHR42995:SF5">
    <property type="entry name" value="ACETYL-COENZYME A CARBOXYLASE CARBOXYL TRANSFERASE SUBUNIT BETA, CHLOROPLASTIC"/>
    <property type="match status" value="1"/>
</dbReference>
<dbReference type="Pfam" id="PF01039">
    <property type="entry name" value="Carboxyl_trans"/>
    <property type="match status" value="1"/>
</dbReference>
<dbReference type="PRINTS" id="PR01070">
    <property type="entry name" value="ACCCTRFRASEB"/>
</dbReference>
<dbReference type="SUPFAM" id="SSF52096">
    <property type="entry name" value="ClpP/crotonase"/>
    <property type="match status" value="1"/>
</dbReference>
<dbReference type="PROSITE" id="PS50980">
    <property type="entry name" value="COA_CT_NTER"/>
    <property type="match status" value="1"/>
</dbReference>
<gene>
    <name evidence="2" type="primary">accD</name>
</gene>
<accession>A8SEB2</accession>
<geneLocation type="chloroplast"/>
<keyword id="KW-0067">ATP-binding</keyword>
<keyword id="KW-0150">Chloroplast</keyword>
<keyword id="KW-0275">Fatty acid biosynthesis</keyword>
<keyword id="KW-0276">Fatty acid metabolism</keyword>
<keyword id="KW-0444">Lipid biosynthesis</keyword>
<keyword id="KW-0443">Lipid metabolism</keyword>
<keyword id="KW-0479">Metal-binding</keyword>
<keyword id="KW-0547">Nucleotide-binding</keyword>
<keyword id="KW-0934">Plastid</keyword>
<keyword id="KW-0808">Transferase</keyword>
<keyword id="KW-0862">Zinc</keyword>
<keyword id="KW-0863">Zinc-finger</keyword>
<evidence type="ECO:0000250" key="1"/>
<evidence type="ECO:0000255" key="2">
    <source>
        <dbReference type="HAMAP-Rule" id="MF_01395"/>
    </source>
</evidence>
<evidence type="ECO:0000255" key="3">
    <source>
        <dbReference type="PROSITE-ProRule" id="PRU01136"/>
    </source>
</evidence>
<evidence type="ECO:0000256" key="4">
    <source>
        <dbReference type="SAM" id="MobiDB-lite"/>
    </source>
</evidence>
<evidence type="ECO:0000305" key="5"/>
<feature type="chain" id="PRO_0000359128" description="Acetyl-coenzyme A carboxylase carboxyl transferase subunit beta, chloroplastic">
    <location>
        <begin position="1"/>
        <end position="491"/>
    </location>
</feature>
<feature type="domain" description="CoA carboxyltransferase N-terminal" evidence="3">
    <location>
        <begin position="222"/>
        <end position="491"/>
    </location>
</feature>
<feature type="zinc finger region" description="C4-type" evidence="2">
    <location>
        <begin position="226"/>
        <end position="248"/>
    </location>
</feature>
<feature type="region of interest" description="Disordered" evidence="4">
    <location>
        <begin position="26"/>
        <end position="49"/>
    </location>
</feature>
<feature type="compositionally biased region" description="Polar residues" evidence="4">
    <location>
        <begin position="32"/>
        <end position="41"/>
    </location>
</feature>
<feature type="binding site" evidence="2">
    <location>
        <position position="226"/>
    </location>
    <ligand>
        <name>Zn(2+)</name>
        <dbReference type="ChEBI" id="CHEBI:29105"/>
    </ligand>
</feature>
<feature type="binding site" evidence="2">
    <location>
        <position position="229"/>
    </location>
    <ligand>
        <name>Zn(2+)</name>
        <dbReference type="ChEBI" id="CHEBI:29105"/>
    </ligand>
</feature>
<feature type="binding site" evidence="2">
    <location>
        <position position="245"/>
    </location>
    <ligand>
        <name>Zn(2+)</name>
        <dbReference type="ChEBI" id="CHEBI:29105"/>
    </ligand>
</feature>
<feature type="binding site" evidence="2">
    <location>
        <position position="248"/>
    </location>
    <ligand>
        <name>Zn(2+)</name>
        <dbReference type="ChEBI" id="CHEBI:29105"/>
    </ligand>
</feature>
<organism>
    <name type="scientific">Ceratophyllum demersum</name>
    <name type="common">Rigid hornwort</name>
    <name type="synonym">Coontail</name>
    <dbReference type="NCBI Taxonomy" id="4428"/>
    <lineage>
        <taxon>Eukaryota</taxon>
        <taxon>Viridiplantae</taxon>
        <taxon>Streptophyta</taxon>
        <taxon>Embryophyta</taxon>
        <taxon>Tracheophyta</taxon>
        <taxon>Spermatophyta</taxon>
        <taxon>Magnoliopsida</taxon>
        <taxon>Ceratophyllales</taxon>
        <taxon>Ceratophyllaceae</taxon>
        <taxon>Ceratophyllum</taxon>
    </lineage>
</organism>